<protein>
    <recommendedName>
        <fullName>Epidermal growth factor receptor substrate 15</fullName>
        <shortName>Protein Eps15</shortName>
    </recommendedName>
    <alternativeName>
        <fullName>Protein AF-1p</fullName>
    </alternativeName>
</protein>
<evidence type="ECO:0000250" key="1"/>
<evidence type="ECO:0000250" key="2">
    <source>
        <dbReference type="UniProtKB" id="P42567"/>
    </source>
</evidence>
<evidence type="ECO:0000255" key="3">
    <source>
        <dbReference type="PROSITE-ProRule" id="PRU00077"/>
    </source>
</evidence>
<evidence type="ECO:0000255" key="4">
    <source>
        <dbReference type="PROSITE-ProRule" id="PRU00213"/>
    </source>
</evidence>
<evidence type="ECO:0000255" key="5">
    <source>
        <dbReference type="PROSITE-ProRule" id="PRU00448"/>
    </source>
</evidence>
<evidence type="ECO:0000256" key="6">
    <source>
        <dbReference type="SAM" id="MobiDB-lite"/>
    </source>
</evidence>
<evidence type="ECO:0000269" key="7">
    <source>
    </source>
</evidence>
<evidence type="ECO:0000269" key="8">
    <source>
    </source>
</evidence>
<evidence type="ECO:0000269" key="9">
    <source>
    </source>
</evidence>
<evidence type="ECO:0000269" key="10">
    <source>
    </source>
</evidence>
<evidence type="ECO:0000269" key="11">
    <source>
    </source>
</evidence>
<evidence type="ECO:0000269" key="12">
    <source>
    </source>
</evidence>
<evidence type="ECO:0000269" key="13">
    <source>
    </source>
</evidence>
<evidence type="ECO:0000269" key="14">
    <source>
    </source>
</evidence>
<evidence type="ECO:0000269" key="15">
    <source>
    </source>
</evidence>
<evidence type="ECO:0000269" key="16">
    <source>
    </source>
</evidence>
<evidence type="ECO:0000269" key="17">
    <source>
    </source>
</evidence>
<evidence type="ECO:0000269" key="18">
    <source>
    </source>
</evidence>
<evidence type="ECO:0000269" key="19">
    <source>
    </source>
</evidence>
<evidence type="ECO:0000269" key="20">
    <source>
    </source>
</evidence>
<evidence type="ECO:0000269" key="21">
    <source>
    </source>
</evidence>
<evidence type="ECO:0000269" key="22">
    <source>
    </source>
</evidence>
<evidence type="ECO:0000269" key="23">
    <source>
    </source>
</evidence>
<evidence type="ECO:0000269" key="24">
    <source>
    </source>
</evidence>
<evidence type="ECO:0000269" key="25">
    <source>
    </source>
</evidence>
<evidence type="ECO:0000269" key="26">
    <source>
    </source>
</evidence>
<evidence type="ECO:0000269" key="27">
    <source>
    </source>
</evidence>
<evidence type="ECO:0000269" key="28">
    <source>
    </source>
</evidence>
<evidence type="ECO:0000269" key="29">
    <source>
    </source>
</evidence>
<evidence type="ECO:0000303" key="30">
    <source>
    </source>
</evidence>
<evidence type="ECO:0000305" key="31"/>
<evidence type="ECO:0000305" key="32">
    <source>
    </source>
</evidence>
<evidence type="ECO:0007744" key="33">
    <source>
    </source>
</evidence>
<evidence type="ECO:0007744" key="34">
    <source>
    </source>
</evidence>
<evidence type="ECO:0007744" key="35">
    <source>
    </source>
</evidence>
<evidence type="ECO:0007744" key="36">
    <source>
    </source>
</evidence>
<evidence type="ECO:0007744" key="37">
    <source>
    </source>
</evidence>
<evidence type="ECO:0007744" key="38">
    <source>
    </source>
</evidence>
<evidence type="ECO:0007744" key="39">
    <source>
    </source>
</evidence>
<evidence type="ECO:0007744" key="40">
    <source>
    </source>
</evidence>
<evidence type="ECO:0007744" key="41">
    <source>
    </source>
</evidence>
<evidence type="ECO:0007744" key="42">
    <source>
    </source>
</evidence>
<evidence type="ECO:0007744" key="43">
    <source>
    </source>
</evidence>
<evidence type="ECO:0007744" key="44">
    <source>
    </source>
</evidence>
<evidence type="ECO:0007829" key="45">
    <source>
        <dbReference type="PDB" id="1C07"/>
    </source>
</evidence>
<evidence type="ECO:0007829" key="46">
    <source>
        <dbReference type="PDB" id="1EH2"/>
    </source>
</evidence>
<evidence type="ECO:0007829" key="47">
    <source>
        <dbReference type="PDB" id="1F8H"/>
    </source>
</evidence>
<evidence type="ECO:0007829" key="48">
    <source>
        <dbReference type="PDB" id="2IV9"/>
    </source>
</evidence>
<evidence type="ECO:0007829" key="49">
    <source>
        <dbReference type="PDB" id="2JXC"/>
    </source>
</evidence>
<evidence type="ECO:0007829" key="50">
    <source>
        <dbReference type="PDB" id="5JP2"/>
    </source>
</evidence>
<feature type="initiator methionine" description="Removed" evidence="37 41 42">
    <location>
        <position position="1"/>
    </location>
</feature>
<feature type="chain" id="PRO_0000146116" description="Epidermal growth factor receptor substrate 15">
    <location>
        <begin position="2"/>
        <end position="896"/>
    </location>
</feature>
<feature type="domain" description="EH 1" evidence="3">
    <location>
        <begin position="15"/>
        <end position="104"/>
    </location>
</feature>
<feature type="domain" description="EF-hand 1" evidence="5">
    <location>
        <begin position="48"/>
        <end position="83"/>
    </location>
</feature>
<feature type="domain" description="EH 2" evidence="3">
    <location>
        <begin position="128"/>
        <end position="216"/>
    </location>
</feature>
<feature type="domain" description="EF-hand 2" evidence="5">
    <location>
        <begin position="160"/>
        <end position="195"/>
    </location>
</feature>
<feature type="domain" description="EF-hand 3" evidence="5">
    <location>
        <begin position="223"/>
        <end position="258"/>
    </location>
</feature>
<feature type="domain" description="EH 3" evidence="3">
    <location>
        <begin position="224"/>
        <end position="314"/>
    </location>
</feature>
<feature type="domain" description="EF-hand 4" evidence="5">
    <location>
        <begin position="262"/>
        <end position="292"/>
    </location>
</feature>
<feature type="repeat" description="1">
    <location>
        <begin position="599"/>
        <end position="601"/>
    </location>
</feature>
<feature type="repeat" description="2">
    <location>
        <begin position="623"/>
        <end position="625"/>
    </location>
</feature>
<feature type="repeat" description="3">
    <location>
        <begin position="629"/>
        <end position="631"/>
    </location>
</feature>
<feature type="repeat" description="4">
    <location>
        <begin position="634"/>
        <end position="636"/>
    </location>
</feature>
<feature type="repeat" description="5">
    <location>
        <begin position="640"/>
        <end position="642"/>
    </location>
</feature>
<feature type="repeat" description="6">
    <location>
        <begin position="645"/>
        <end position="647"/>
    </location>
</feature>
<feature type="repeat" description="7">
    <location>
        <begin position="651"/>
        <end position="653"/>
    </location>
</feature>
<feature type="repeat" description="8">
    <location>
        <begin position="664"/>
        <end position="666"/>
    </location>
</feature>
<feature type="repeat" description="9">
    <location>
        <begin position="672"/>
        <end position="674"/>
    </location>
</feature>
<feature type="repeat" description="10">
    <location>
        <begin position="692"/>
        <end position="694"/>
    </location>
</feature>
<feature type="repeat" description="11">
    <location>
        <begin position="709"/>
        <end position="711"/>
    </location>
</feature>
<feature type="repeat" description="12">
    <location>
        <begin position="737"/>
        <end position="739"/>
    </location>
</feature>
<feature type="repeat" description="13">
    <location>
        <begin position="798"/>
        <end position="800"/>
    </location>
</feature>
<feature type="repeat" description="14">
    <location>
        <begin position="804"/>
        <end position="806"/>
    </location>
</feature>
<feature type="repeat" description="15">
    <location>
        <begin position="825"/>
        <end position="827"/>
    </location>
</feature>
<feature type="domain" description="UIM 1" evidence="4">
    <location>
        <begin position="851"/>
        <end position="870"/>
    </location>
</feature>
<feature type="domain" description="UIM 2" evidence="4">
    <location>
        <begin position="877"/>
        <end position="896"/>
    </location>
</feature>
<feature type="region of interest" description="Interaction with DAB2" evidence="1">
    <location>
        <begin position="2"/>
        <end position="330"/>
    </location>
</feature>
<feature type="region of interest" description="Disordered" evidence="6">
    <location>
        <begin position="542"/>
        <end position="606"/>
    </location>
</feature>
<feature type="region of interest" description="15 X 3 AA repeats of D-P-F">
    <location>
        <begin position="599"/>
        <end position="827"/>
    </location>
</feature>
<feature type="region of interest" description="Disordered" evidence="6">
    <location>
        <begin position="760"/>
        <end position="848"/>
    </location>
</feature>
<feature type="short sequence motif" description="SH3-binding">
    <location>
        <begin position="768"/>
        <end position="774"/>
    </location>
</feature>
<feature type="compositionally biased region" description="Basic and acidic residues" evidence="6">
    <location>
        <begin position="585"/>
        <end position="599"/>
    </location>
</feature>
<feature type="binding site" evidence="5">
    <location>
        <position position="173"/>
    </location>
    <ligand>
        <name>Ca(2+)</name>
        <dbReference type="ChEBI" id="CHEBI:29108"/>
        <label>1</label>
    </ligand>
</feature>
<feature type="binding site" evidence="5">
    <location>
        <position position="175"/>
    </location>
    <ligand>
        <name>Ca(2+)</name>
        <dbReference type="ChEBI" id="CHEBI:29108"/>
        <label>1</label>
    </ligand>
</feature>
<feature type="binding site" evidence="5">
    <location>
        <position position="177"/>
    </location>
    <ligand>
        <name>Ca(2+)</name>
        <dbReference type="ChEBI" id="CHEBI:29108"/>
        <label>1</label>
    </ligand>
</feature>
<feature type="binding site" evidence="5">
    <location>
        <position position="179"/>
    </location>
    <ligand>
        <name>Ca(2+)</name>
        <dbReference type="ChEBI" id="CHEBI:29108"/>
        <label>1</label>
    </ligand>
</feature>
<feature type="binding site" evidence="5">
    <location>
        <position position="184"/>
    </location>
    <ligand>
        <name>Ca(2+)</name>
        <dbReference type="ChEBI" id="CHEBI:29108"/>
        <label>1</label>
    </ligand>
</feature>
<feature type="binding site" evidence="5">
    <location>
        <position position="236"/>
    </location>
    <ligand>
        <name>Ca(2+)</name>
        <dbReference type="ChEBI" id="CHEBI:29108"/>
        <label>2</label>
    </ligand>
</feature>
<feature type="binding site" evidence="5">
    <location>
        <position position="238"/>
    </location>
    <ligand>
        <name>Ca(2+)</name>
        <dbReference type="ChEBI" id="CHEBI:29108"/>
        <label>2</label>
    </ligand>
</feature>
<feature type="binding site" evidence="5">
    <location>
        <position position="240"/>
    </location>
    <ligand>
        <name>Ca(2+)</name>
        <dbReference type="ChEBI" id="CHEBI:29108"/>
        <label>2</label>
    </ligand>
</feature>
<feature type="binding site" evidence="5">
    <location>
        <position position="247"/>
    </location>
    <ligand>
        <name>Ca(2+)</name>
        <dbReference type="ChEBI" id="CHEBI:29108"/>
        <label>2</label>
    </ligand>
</feature>
<feature type="modified residue" description="N-acetylalanine" evidence="37 41 42">
    <location>
        <position position="2"/>
    </location>
</feature>
<feature type="modified residue" description="Phosphoserine" evidence="38">
    <location>
        <position position="108"/>
    </location>
</feature>
<feature type="modified residue" description="Phosphoserine" evidence="36">
    <location>
        <position position="140"/>
    </location>
</feature>
<feature type="modified residue" description="Phosphoserine" evidence="33 36 38">
    <location>
        <position position="323"/>
    </location>
</feature>
<feature type="modified residue" description="Phosphoserine" evidence="38 39 40 43 44">
    <location>
        <position position="324"/>
    </location>
</feature>
<feature type="modified residue" description="Phosphoserine" evidence="39">
    <location>
        <position position="467"/>
    </location>
</feature>
<feature type="modified residue" description="Phosphoserine" evidence="39">
    <location>
        <position position="470"/>
    </location>
</feature>
<feature type="modified residue" description="Phosphoserine" evidence="34 36 40">
    <location>
        <position position="485"/>
    </location>
</feature>
<feature type="modified residue" description="Phosphoserine" evidence="2">
    <location>
        <position position="562"/>
    </location>
</feature>
<feature type="modified residue" description="Phosphoserine" evidence="2">
    <location>
        <position position="563"/>
    </location>
</feature>
<feature type="modified residue" description="Phosphoserine" evidence="43">
    <location>
        <position position="746"/>
    </location>
</feature>
<feature type="modified residue" description="Phosphothreonine" evidence="43 44">
    <location>
        <position position="777"/>
    </location>
</feature>
<feature type="modified residue" description="Phosphothreonine" evidence="2">
    <location>
        <position position="779"/>
    </location>
</feature>
<feature type="modified residue" description="Phosphoserine" evidence="39 40 43">
    <location>
        <position position="790"/>
    </location>
</feature>
<feature type="modified residue" description="Phosphoserine" evidence="35 39 40 43 44">
    <location>
        <position position="796"/>
    </location>
</feature>
<feature type="modified residue" description="Phosphoserine" evidence="35 36 38 39 40 43 44">
    <location>
        <position position="814"/>
    </location>
</feature>
<feature type="modified residue" description="Phosphotyrosine; by EGFR" evidence="38">
    <location>
        <position position="849"/>
    </location>
</feature>
<feature type="splice variant" id="VSP_036168" description="In isoform 2." evidence="30">
    <location>
        <begin position="1"/>
        <end position="314"/>
    </location>
</feature>
<feature type="splice variant" id="VSP_036169" description="In isoform 2." evidence="30">
    <original>SLQKNIIGSSPVADFSAIKELDTLNNEIVDLQ</original>
    <variation>MYLKSDSGLGGWITIPAVADVLKYSCIVCWSS</variation>
    <location>
        <begin position="315"/>
        <end position="346"/>
    </location>
</feature>
<feature type="sequence variant" id="VAR_016142" description="In dbSNP:rs17567." evidence="26">
    <original>I</original>
    <variation>M</variation>
    <location>
        <position position="822"/>
    </location>
</feature>
<feature type="mutagenesis site" description="Loss of interaction with STON2 NPF motifs." evidence="16">
    <original>V</original>
    <variation>E</variation>
    <location>
        <position position="154"/>
    </location>
</feature>
<feature type="mutagenesis site" description="Loss of interaction with STON2 NPF motifs." evidence="16">
    <original>W</original>
    <variation>A</variation>
    <location>
        <position position="169"/>
    </location>
</feature>
<feature type="sequence conflict" description="In Ref. 5; BX647676." evidence="31" ref="5">
    <location>
        <position position="446"/>
    </location>
</feature>
<feature type="helix" evidence="46">
    <location>
        <begin position="126"/>
        <end position="136"/>
    </location>
</feature>
<feature type="strand" evidence="46">
    <location>
        <begin position="142"/>
        <end position="144"/>
    </location>
</feature>
<feature type="strand" evidence="49">
    <location>
        <begin position="145"/>
        <end position="147"/>
    </location>
</feature>
<feature type="helix" evidence="46">
    <location>
        <begin position="148"/>
        <end position="156"/>
    </location>
</feature>
<feature type="turn" evidence="46">
    <location>
        <begin position="157"/>
        <end position="159"/>
    </location>
</feature>
<feature type="helix" evidence="46">
    <location>
        <begin position="162"/>
        <end position="172"/>
    </location>
</feature>
<feature type="strand" evidence="46">
    <location>
        <begin position="177"/>
        <end position="179"/>
    </location>
</feature>
<feature type="helix" evidence="46">
    <location>
        <begin position="182"/>
        <end position="197"/>
    </location>
</feature>
<feature type="turn" evidence="46">
    <location>
        <begin position="207"/>
        <end position="209"/>
    </location>
</feature>
<feature type="helix" evidence="47">
    <location>
        <begin position="212"/>
        <end position="214"/>
    </location>
</feature>
<feature type="helix" evidence="45">
    <location>
        <begin position="223"/>
        <end position="235"/>
    </location>
</feature>
<feature type="strand" evidence="45">
    <location>
        <begin position="240"/>
        <end position="243"/>
    </location>
</feature>
<feature type="helix" evidence="45">
    <location>
        <begin position="245"/>
        <end position="253"/>
    </location>
</feature>
<feature type="turn" evidence="45">
    <location>
        <begin position="254"/>
        <end position="256"/>
    </location>
</feature>
<feature type="helix" evidence="45">
    <location>
        <begin position="259"/>
        <end position="269"/>
    </location>
</feature>
<feature type="strand" evidence="45">
    <location>
        <begin position="274"/>
        <end position="278"/>
    </location>
</feature>
<feature type="turn" evidence="45">
    <location>
        <begin position="279"/>
        <end position="281"/>
    </location>
</feature>
<feature type="helix" evidence="45">
    <location>
        <begin position="282"/>
        <end position="293"/>
    </location>
</feature>
<feature type="turn" evidence="45">
    <location>
        <begin position="305"/>
        <end position="307"/>
    </location>
</feature>
<feature type="turn" evidence="50">
    <location>
        <begin position="624"/>
        <end position="627"/>
    </location>
</feature>
<feature type="turn" evidence="50">
    <location>
        <begin position="630"/>
        <end position="633"/>
    </location>
</feature>
<feature type="helix" evidence="48">
    <location>
        <begin position="723"/>
        <end position="726"/>
    </location>
</feature>
<accession>P42566</accession>
<accession>B2R8J7</accession>
<accession>D3DPJ2</accession>
<accession>Q5SRH4</accession>
<proteinExistence type="evidence at protein level"/>
<comment type="function">
    <text evidence="14 17 18 22">Involved in cell growth regulation. May be involved in the regulation of mitogenic signals and control of cell proliferation. Involved in the internalization of ligand-inducible receptors of the receptor tyrosine kinase (RTK) type, in particular EGFR. Plays a role in the assembly of clathrin-coated pits (CCPs). Acts as a clathrin adapter required for post-Golgi trafficking. Seems to be involved in CCPs maturation including invagination or budding. Involved in endocytosis of integrin beta-1 (ITGB1) and transferrin receptor (TFR); internalization of ITGB1 as DAB2-dependent cargo but not TFR seems to require association with DAB2.</text>
</comment>
<comment type="subunit">
    <text evidence="2 7 8 9 10 11 12 13 14 15 16 17 19 20 21 22 23 24 27 28 29">Interacts with SGIP1 (PubMed:26822536). Interacts with HGS; the interaction bridges the interaction of STAM or STAM2 with EPS15. Isoform 2 interacts with HGS and AP2A2. Part of a complex at least composed of EPS15, HGS, and either STAM or STAM2. Binds AP2A2. Interacts with AP2B1; clathrin competes with EPS15. Binds STON2. Interacts (via its SH3-binding sites) with CRK. Interacts with SH3BP4/TTP. Interacts with ERBB2. Interacts with FCHO1. Interacts with FCHO2. Interacts (via EH domains) with DAB2. Interacts (via UIM repeats) with CORO7 (when ubiquitinated at 'Lys-472'). Interacts (via UIM domains) with UBQLN1 (via ubiquitin-like domain) and can interact with both the ubiquitinated and the non-ubiquitinated forms of UBQLN1. Interacts with UBQLN2 (By similarity) (PubMed:10757979, PubMed:11062555, PubMed:12551915, PubMed:16159959, PubMed:16314522, PubMed:16325581, PubMed:16903783, PubMed:18199683, PubMed:18200045, PubMed:18362181, PubMed:20448150, PubMed:21762413, PubMed:22484487, PubMed:22648170, PubMed:24768539, PubMed:8662907, PubMed:9721102, PubMed:9723620). Interacts with REPS2; the interaction is direct (PubMed:10393179). Interacts with EPN1; the interaction is direct (PubMed:10393179, PubMed:9723620).</text>
</comment>
<comment type="subunit">
    <text evidence="25">(Microbial infection) Interacts with vaccinia virus protein A36.</text>
</comment>
<comment type="interaction">
    <interactant intactId="EBI-396684">
        <id>P42566</id>
    </interactant>
    <interactant intactId="EBI-713198">
        <id>Q9Y6I3</id>
        <label>EPN1</label>
    </interactant>
    <organismsDiffer>false</organismsDiffer>
    <experiments>2</experiments>
</comment>
<comment type="interaction">
    <interactant intactId="EBI-396684">
        <id>P42566</id>
    </interactant>
    <interactant intactId="EBI-2609756">
        <id>Q0JRZ9</id>
        <label>FCHO2</label>
    </interactant>
    <organismsDiffer>false</organismsDiffer>
    <experiments>4</experiments>
</comment>
<comment type="interaction">
    <interactant intactId="EBI-396684">
        <id>P42566</id>
    </interactant>
    <interactant intactId="EBI-602041">
        <id>Q15811</id>
        <label>ITSN1</label>
    </interactant>
    <organismsDiffer>false</organismsDiffer>
    <experiments>3</experiments>
</comment>
<comment type="interaction">
    <interactant intactId="EBI-396684">
        <id>P42566</id>
    </interactant>
    <interactant intactId="EBI-389883">
        <id>P16333</id>
        <label>NCK1</label>
    </interactant>
    <organismsDiffer>false</organismsDiffer>
    <experiments>2</experiments>
</comment>
<comment type="interaction">
    <interactant intactId="EBI-396684">
        <id>P42566</id>
    </interactant>
    <interactant intactId="EBI-915016">
        <id>P49757</id>
        <label>NUMB</label>
    </interactant>
    <organismsDiffer>false</organismsDiffer>
    <experiments>4</experiments>
</comment>
<comment type="interaction">
    <interactant intactId="EBI-396684">
        <id>P42566</id>
    </interactant>
    <interactant intactId="EBI-2803688">
        <id>Q13492</id>
        <label>PICALM</label>
    </interactant>
    <organismsDiffer>false</organismsDiffer>
    <experiments>2</experiments>
</comment>
<comment type="interaction">
    <interactant intactId="EBI-396684">
        <id>P42566</id>
    </interactant>
    <interactant intactId="EBI-1049513">
        <id>Q9P0V3</id>
        <label>SH3BP4</label>
    </interactant>
    <organismsDiffer>false</organismsDiffer>
    <experiments>2</experiments>
</comment>
<comment type="interaction">
    <interactant intactId="EBI-396684">
        <id>P42566</id>
    </interactant>
    <interactant intactId="EBI-539742">
        <id>Q8WXE9</id>
        <label>STON2</label>
    </interactant>
    <organismsDiffer>false</organismsDiffer>
    <experiments>19</experiments>
</comment>
<comment type="interaction">
    <interactant intactId="EBI-396684">
        <id>P42566</id>
    </interactant>
    <interactant intactId="EBI-741480">
        <id>Q9UMX0</id>
        <label>UBQLN1</label>
    </interactant>
    <organismsDiffer>false</organismsDiffer>
    <experiments>5</experiments>
</comment>
<comment type="interaction">
    <interactant intactId="EBI-396684">
        <id>P42566</id>
    </interactant>
    <interactant intactId="EBI-6094986">
        <id>Q3UQN2</id>
        <label>Fcho2</label>
    </interactant>
    <organismsDiffer>true</organismsDiffer>
    <experiments>3</experiments>
</comment>
<comment type="interaction">
    <interactant intactId="EBI-396684">
        <id>P42566</id>
    </interactant>
    <interactant intactId="EBI-9547433">
        <id>Q9QZS3-1</id>
        <label>Numb</label>
    </interactant>
    <organismsDiffer>true</organismsDiffer>
    <experiments>3</experiments>
</comment>
<comment type="interaction">
    <interactant intactId="EBI-396684">
        <id>P42566</id>
    </interactant>
    <interactant intactId="EBI-3896014">
        <id>Q9QZS3-2</id>
        <label>Numb</label>
    </interactant>
    <organismsDiffer>true</organismsDiffer>
    <experiments>3</experiments>
</comment>
<comment type="interaction">
    <interactant intactId="EBI-15895294">
        <id>P42566-1</id>
    </interactant>
    <interactant intactId="EBI-1047946">
        <id>P26045</id>
        <label>PTPN3</label>
    </interactant>
    <organismsDiffer>false</organismsDiffer>
    <experiments>4</experiments>
</comment>
<comment type="subcellular location">
    <subcellularLocation>
        <location>Cytoplasm</location>
    </subcellularLocation>
    <subcellularLocation>
        <location>Cell membrane</location>
        <topology>Peripheral membrane protein</topology>
        <orientation>Cytoplasmic side</orientation>
    </subcellularLocation>
    <subcellularLocation>
        <location>Membrane</location>
        <location>Clathrin-coated pit</location>
    </subcellularLocation>
    <text evidence="11">Recruited to the plasma membrane upon EGFR activation and localizes to coated pits. Colocalizes with UBQLN1 in ubiquitin-rich cytoplasmic aggregates that are not endocytic compartments and in cytoplasmic juxtanuclear structures called aggresomes.</text>
</comment>
<comment type="subcellular location">
    <molecule>Isoform 2</molecule>
    <subcellularLocation>
        <location evidence="17">Early endosome membrane</location>
        <topology evidence="17">Peripheral membrane protein</topology>
        <orientation evidence="17">Cytoplasmic side</orientation>
    </subcellularLocation>
    <text>Colocalizes with HGS on bilayered clathrin coats on endosomes.</text>
</comment>
<comment type="alternative products">
    <event type="alternative splicing"/>
    <isoform>
        <id>P42566-1</id>
        <name>1</name>
        <sequence type="displayed"/>
    </isoform>
    <isoform>
        <id>P42566-2</id>
        <name>2</name>
        <name>Eps15b</name>
        <sequence type="described" ref="VSP_036168 VSP_036169"/>
    </isoform>
</comment>
<comment type="tissue specificity">
    <text>Ubiquitously expressed.</text>
</comment>
<comment type="domain">
    <text evidence="9">The EH domain interacts with Asn-Pro-Phe (NPF) motifs of target proteins.</text>
</comment>
<comment type="domain">
    <text evidence="9 23">The UIM (ubiquitin-interacting motif) repeats specifically bind 'Lys-33'-linked ubiquitin.</text>
</comment>
<comment type="PTM">
    <text evidence="1">Phosphorylation on Tyr-849 is involved in the internalization of EGFR. Not required for membrane translocation after EGF treatment or for targeting to coated pits, but essential for a subsequent step in EGFR endocytosis (By similarity). Phosphorylated on serine upon DNA damage, probably by ATM or ATR.</text>
</comment>
<comment type="PTM">
    <text evidence="2">Ubiquitinated.</text>
</comment>
<comment type="disease">
    <text>A chromosomal aberration involving EPS15 is found in acute leukemias. Translocation t(1;11)(p32;q23) with KMT2A/MLL1. The result is a rogue activator protein.</text>
</comment>
<comment type="caution">
    <text evidence="32">Studies in clathrin-mediated endocytosis of ITGB1 and TFR used a siRNA mixture of EPS15 and EPS15L1, and a Dab2 mutant with impaired binding to EH domain-containing proteins EPS15 and ITSN1 suggesting a partially overlapping role of the EH domain-containing proteins.</text>
</comment>
<comment type="online information" name="Atlas of Genetics and Cytogenetics in Oncology and Haematology">
    <link uri="https://atlasgeneticsoncology.org/gene/11/AF1p"/>
</comment>
<dbReference type="EMBL" id="U07707">
    <property type="protein sequence ID" value="AAA52101.1"/>
    <property type="molecule type" value="mRNA"/>
</dbReference>
<dbReference type="EMBL" id="Z29064">
    <property type="protein sequence ID" value="CAA82305.1"/>
    <property type="molecule type" value="mRNA"/>
</dbReference>
<dbReference type="EMBL" id="AK313396">
    <property type="protein sequence ID" value="BAG36194.1"/>
    <property type="molecule type" value="mRNA"/>
</dbReference>
<dbReference type="EMBL" id="DQ367924">
    <property type="protein sequence ID" value="ABD34786.1"/>
    <property type="molecule type" value="mRNA"/>
</dbReference>
<dbReference type="EMBL" id="BX647676">
    <property type="status" value="NOT_ANNOTATED_CDS"/>
    <property type="molecule type" value="mRNA"/>
</dbReference>
<dbReference type="EMBL" id="AC104170">
    <property type="status" value="NOT_ANNOTATED_CDS"/>
    <property type="molecule type" value="Genomic_DNA"/>
</dbReference>
<dbReference type="EMBL" id="AL671986">
    <property type="status" value="NOT_ANNOTATED_CDS"/>
    <property type="molecule type" value="Genomic_DNA"/>
</dbReference>
<dbReference type="EMBL" id="CH471059">
    <property type="protein sequence ID" value="EAX06823.1"/>
    <property type="molecule type" value="Genomic_DNA"/>
</dbReference>
<dbReference type="CCDS" id="CCDS557.1">
    <molecule id="P42566-1"/>
</dbReference>
<dbReference type="CCDS" id="CCDS90955.1">
    <molecule id="P42566-2"/>
</dbReference>
<dbReference type="PIR" id="S43074">
    <property type="entry name" value="S43074"/>
</dbReference>
<dbReference type="RefSeq" id="NP_001153441.1">
    <molecule id="P42566-2"/>
    <property type="nucleotide sequence ID" value="NM_001159969.2"/>
</dbReference>
<dbReference type="RefSeq" id="NP_001972.1">
    <molecule id="P42566-1"/>
    <property type="nucleotide sequence ID" value="NM_001981.3"/>
</dbReference>
<dbReference type="PDB" id="1C07">
    <property type="method" value="NMR"/>
    <property type="chains" value="A=217-311"/>
</dbReference>
<dbReference type="PDB" id="1EH2">
    <property type="method" value="NMR"/>
    <property type="chains" value="A=121-218"/>
</dbReference>
<dbReference type="PDB" id="1F8H">
    <property type="method" value="NMR"/>
    <property type="chains" value="A=121-215"/>
</dbReference>
<dbReference type="PDB" id="1FF1">
    <property type="method" value="NMR"/>
    <property type="chains" value="A=121-215"/>
</dbReference>
<dbReference type="PDB" id="2IV9">
    <property type="method" value="X-ray"/>
    <property type="resolution" value="1.90 A"/>
    <property type="chains" value="P=723-730"/>
</dbReference>
<dbReference type="PDB" id="2JXC">
    <property type="method" value="NMR"/>
    <property type="chains" value="A=121-215"/>
</dbReference>
<dbReference type="PDB" id="4RH5">
    <property type="method" value="X-ray"/>
    <property type="resolution" value="1.60 A"/>
    <property type="chains" value="B=846-854"/>
</dbReference>
<dbReference type="PDB" id="4RH9">
    <property type="method" value="X-ray"/>
    <property type="resolution" value="1.60 A"/>
    <property type="chains" value="B=846-854"/>
</dbReference>
<dbReference type="PDB" id="4RHG">
    <property type="method" value="X-ray"/>
    <property type="resolution" value="1.58 A"/>
    <property type="chains" value="B=846-854"/>
</dbReference>
<dbReference type="PDB" id="4S0G">
    <property type="method" value="X-ray"/>
    <property type="resolution" value="1.72 A"/>
    <property type="chains" value="B=846-854"/>
</dbReference>
<dbReference type="PDB" id="5AWT">
    <property type="method" value="X-ray"/>
    <property type="resolution" value="2.70 A"/>
    <property type="chains" value="B=640-649"/>
</dbReference>
<dbReference type="PDB" id="5AWU">
    <property type="method" value="X-ray"/>
    <property type="resolution" value="2.70 A"/>
    <property type="chains" value="B=645-654"/>
</dbReference>
<dbReference type="PDB" id="5JP2">
    <property type="method" value="X-ray"/>
    <property type="resolution" value="2.40 A"/>
    <property type="chains" value="E/F=615-637"/>
</dbReference>
<dbReference type="PDBsum" id="1C07"/>
<dbReference type="PDBsum" id="1EH2"/>
<dbReference type="PDBsum" id="1F8H"/>
<dbReference type="PDBsum" id="1FF1"/>
<dbReference type="PDBsum" id="2IV9"/>
<dbReference type="PDBsum" id="2JXC"/>
<dbReference type="PDBsum" id="4RH5"/>
<dbReference type="PDBsum" id="4RH9"/>
<dbReference type="PDBsum" id="4RHG"/>
<dbReference type="PDBsum" id="4S0G"/>
<dbReference type="PDBsum" id="5AWT"/>
<dbReference type="PDBsum" id="5AWU"/>
<dbReference type="PDBsum" id="5JP2"/>
<dbReference type="SMR" id="P42566"/>
<dbReference type="BioGRID" id="108374">
    <property type="interactions" value="242"/>
</dbReference>
<dbReference type="CORUM" id="P42566"/>
<dbReference type="DIP" id="DIP-33064N"/>
<dbReference type="ELM" id="P42566"/>
<dbReference type="FunCoup" id="P42566">
    <property type="interactions" value="2406"/>
</dbReference>
<dbReference type="IntAct" id="P42566">
    <property type="interactions" value="159"/>
</dbReference>
<dbReference type="MINT" id="P42566"/>
<dbReference type="STRING" id="9606.ENSP00000360798"/>
<dbReference type="BindingDB" id="P42566"/>
<dbReference type="ChEMBL" id="CHEMBL4295760"/>
<dbReference type="MoonDB" id="P42566">
    <property type="type" value="Curated"/>
</dbReference>
<dbReference type="MoonProt" id="P42566"/>
<dbReference type="GlyGen" id="P42566">
    <property type="glycosylation" value="1 site, 1 O-linked glycan (1 site)"/>
</dbReference>
<dbReference type="iPTMnet" id="P42566"/>
<dbReference type="PhosphoSitePlus" id="P42566"/>
<dbReference type="BioMuta" id="EPS15"/>
<dbReference type="DMDM" id="67476728"/>
<dbReference type="OGP" id="P42566"/>
<dbReference type="CPTAC" id="CPTAC-966"/>
<dbReference type="CPTAC" id="CPTAC-967"/>
<dbReference type="jPOST" id="P42566"/>
<dbReference type="MassIVE" id="P42566"/>
<dbReference type="PaxDb" id="9606-ENSP00000360798"/>
<dbReference type="PeptideAtlas" id="P42566"/>
<dbReference type="ProteomicsDB" id="55515">
    <molecule id="P42566-1"/>
</dbReference>
<dbReference type="ProteomicsDB" id="55516">
    <molecule id="P42566-2"/>
</dbReference>
<dbReference type="Antibodypedia" id="1916">
    <property type="antibodies" value="253 antibodies from 31 providers"/>
</dbReference>
<dbReference type="DNASU" id="2060"/>
<dbReference type="Ensembl" id="ENST00000371733.8">
    <molecule id="P42566-1"/>
    <property type="protein sequence ID" value="ENSP00000360798.3"/>
    <property type="gene ID" value="ENSG00000085832.18"/>
</dbReference>
<dbReference type="Ensembl" id="ENST00000493793.2">
    <molecule id="P42566-2"/>
    <property type="protein sequence ID" value="ENSP00000516332.1"/>
    <property type="gene ID" value="ENSG00000085832.18"/>
</dbReference>
<dbReference type="GeneID" id="2060"/>
<dbReference type="KEGG" id="hsa:2060"/>
<dbReference type="MANE-Select" id="ENST00000371733.8">
    <property type="protein sequence ID" value="ENSP00000360798.3"/>
    <property type="RefSeq nucleotide sequence ID" value="NM_001981.3"/>
    <property type="RefSeq protein sequence ID" value="NP_001972.1"/>
</dbReference>
<dbReference type="UCSC" id="uc001csq.2">
    <molecule id="P42566-1"/>
    <property type="organism name" value="human"/>
</dbReference>
<dbReference type="AGR" id="HGNC:3419"/>
<dbReference type="CTD" id="2060"/>
<dbReference type="DisGeNET" id="2060"/>
<dbReference type="GeneCards" id="EPS15"/>
<dbReference type="HGNC" id="HGNC:3419">
    <property type="gene designation" value="EPS15"/>
</dbReference>
<dbReference type="HPA" id="ENSG00000085832">
    <property type="expression patterns" value="Low tissue specificity"/>
</dbReference>
<dbReference type="MIM" id="600051">
    <property type="type" value="gene"/>
</dbReference>
<dbReference type="neXtProt" id="NX_P42566"/>
<dbReference type="OpenTargets" id="ENSG00000085832"/>
<dbReference type="PharmGKB" id="PA27838"/>
<dbReference type="VEuPathDB" id="HostDB:ENSG00000085832"/>
<dbReference type="eggNOG" id="KOG0998">
    <property type="taxonomic scope" value="Eukaryota"/>
</dbReference>
<dbReference type="GeneTree" id="ENSGT00940000155751"/>
<dbReference type="InParanoid" id="P42566"/>
<dbReference type="OMA" id="GHFLQTS"/>
<dbReference type="OrthoDB" id="524326at2759"/>
<dbReference type="PAN-GO" id="P42566">
    <property type="GO annotations" value="5 GO annotations based on evolutionary models"/>
</dbReference>
<dbReference type="PhylomeDB" id="P42566"/>
<dbReference type="TreeFam" id="TF324293"/>
<dbReference type="PathwayCommons" id="P42566"/>
<dbReference type="Reactome" id="R-HSA-182971">
    <property type="pathway name" value="EGFR downregulation"/>
</dbReference>
<dbReference type="Reactome" id="R-HSA-6807004">
    <property type="pathway name" value="Negative regulation of MET activity"/>
</dbReference>
<dbReference type="Reactome" id="R-HSA-8856825">
    <property type="pathway name" value="Cargo recognition for clathrin-mediated endocytosis"/>
</dbReference>
<dbReference type="Reactome" id="R-HSA-8856828">
    <property type="pathway name" value="Clathrin-mediated endocytosis"/>
</dbReference>
<dbReference type="Reactome" id="R-HSA-8875360">
    <property type="pathway name" value="InlB-mediated entry of Listeria monocytogenes into host cell"/>
</dbReference>
<dbReference type="SignaLink" id="P42566"/>
<dbReference type="SIGNOR" id="P42566"/>
<dbReference type="BioGRID-ORCS" id="2060">
    <property type="hits" value="11 hits in 1157 CRISPR screens"/>
</dbReference>
<dbReference type="ChiTaRS" id="EPS15">
    <property type="organism name" value="human"/>
</dbReference>
<dbReference type="EvolutionaryTrace" id="P42566"/>
<dbReference type="GeneWiki" id="EPS15"/>
<dbReference type="GenomeRNAi" id="2060"/>
<dbReference type="Pharos" id="P42566">
    <property type="development level" value="Tchem"/>
</dbReference>
<dbReference type="PRO" id="PR:P42566"/>
<dbReference type="Proteomes" id="UP000005640">
    <property type="component" value="Chromosome 1"/>
</dbReference>
<dbReference type="RNAct" id="P42566">
    <property type="molecule type" value="protein"/>
</dbReference>
<dbReference type="Bgee" id="ENSG00000085832">
    <property type="expression patterns" value="Expressed in endothelial cell and 213 other cell types or tissues"/>
</dbReference>
<dbReference type="ExpressionAtlas" id="P42566">
    <property type="expression patterns" value="baseline and differential"/>
</dbReference>
<dbReference type="GO" id="GO:0016235">
    <property type="term" value="C:aggresome"/>
    <property type="evidence" value="ECO:0000314"/>
    <property type="project" value="UniProtKB"/>
</dbReference>
<dbReference type="GO" id="GO:0030122">
    <property type="term" value="C:AP-2 adaptor complex"/>
    <property type="evidence" value="ECO:0007669"/>
    <property type="project" value="Ensembl"/>
</dbReference>
<dbReference type="GO" id="GO:0016324">
    <property type="term" value="C:apical plasma membrane"/>
    <property type="evidence" value="ECO:0007669"/>
    <property type="project" value="Ensembl"/>
</dbReference>
<dbReference type="GO" id="GO:0009925">
    <property type="term" value="C:basal plasma membrane"/>
    <property type="evidence" value="ECO:0007669"/>
    <property type="project" value="Ensembl"/>
</dbReference>
<dbReference type="GO" id="GO:0060170">
    <property type="term" value="C:ciliary membrane"/>
    <property type="evidence" value="ECO:0007669"/>
    <property type="project" value="Ensembl"/>
</dbReference>
<dbReference type="GO" id="GO:0030132">
    <property type="term" value="C:clathrin coat of coated pit"/>
    <property type="evidence" value="ECO:0000318"/>
    <property type="project" value="GO_Central"/>
</dbReference>
<dbReference type="GO" id="GO:0005905">
    <property type="term" value="C:clathrin-coated pit"/>
    <property type="evidence" value="ECO:0000304"/>
    <property type="project" value="UniProtKB"/>
</dbReference>
<dbReference type="GO" id="GO:0005737">
    <property type="term" value="C:cytoplasm"/>
    <property type="evidence" value="ECO:0000318"/>
    <property type="project" value="GO_Central"/>
</dbReference>
<dbReference type="GO" id="GO:0005829">
    <property type="term" value="C:cytosol"/>
    <property type="evidence" value="ECO:0000314"/>
    <property type="project" value="HPA"/>
</dbReference>
<dbReference type="GO" id="GO:0031901">
    <property type="term" value="C:early endosome membrane"/>
    <property type="evidence" value="ECO:0007669"/>
    <property type="project" value="UniProtKB-SubCell"/>
</dbReference>
<dbReference type="GO" id="GO:0098978">
    <property type="term" value="C:glutamatergic synapse"/>
    <property type="evidence" value="ECO:0007669"/>
    <property type="project" value="Ensembl"/>
</dbReference>
<dbReference type="GO" id="GO:0043231">
    <property type="term" value="C:intracellular membrane-bounded organelle"/>
    <property type="evidence" value="ECO:0000314"/>
    <property type="project" value="HPA"/>
</dbReference>
<dbReference type="GO" id="GO:0016020">
    <property type="term" value="C:membrane"/>
    <property type="evidence" value="ECO:0007005"/>
    <property type="project" value="UniProtKB"/>
</dbReference>
<dbReference type="GO" id="GO:0005886">
    <property type="term" value="C:plasma membrane"/>
    <property type="evidence" value="ECO:0000314"/>
    <property type="project" value="HGNC-UCL"/>
</dbReference>
<dbReference type="GO" id="GO:0098843">
    <property type="term" value="C:postsynaptic endocytic zone"/>
    <property type="evidence" value="ECO:0007669"/>
    <property type="project" value="Ensembl"/>
</dbReference>
<dbReference type="GO" id="GO:0045296">
    <property type="term" value="F:cadherin binding"/>
    <property type="evidence" value="ECO:0007005"/>
    <property type="project" value="BHF-UCL"/>
</dbReference>
<dbReference type="GO" id="GO:0005509">
    <property type="term" value="F:calcium ion binding"/>
    <property type="evidence" value="ECO:0007669"/>
    <property type="project" value="InterPro"/>
</dbReference>
<dbReference type="GO" id="GO:0042802">
    <property type="term" value="F:identical protein binding"/>
    <property type="evidence" value="ECO:0007669"/>
    <property type="project" value="Ensembl"/>
</dbReference>
<dbReference type="GO" id="GO:0031593">
    <property type="term" value="F:polyubiquitin modification-dependent protein binding"/>
    <property type="evidence" value="ECO:0000314"/>
    <property type="project" value="UniProtKB"/>
</dbReference>
<dbReference type="GO" id="GO:0017124">
    <property type="term" value="F:SH3 domain binding"/>
    <property type="evidence" value="ECO:0007669"/>
    <property type="project" value="UniProtKB-KW"/>
</dbReference>
<dbReference type="GO" id="GO:0043130">
    <property type="term" value="F:ubiquitin binding"/>
    <property type="evidence" value="ECO:0007669"/>
    <property type="project" value="Ensembl"/>
</dbReference>
<dbReference type="GO" id="GO:0048268">
    <property type="term" value="P:clathrin coat assembly"/>
    <property type="evidence" value="ECO:0000314"/>
    <property type="project" value="BHF-UCL"/>
</dbReference>
<dbReference type="GO" id="GO:0032456">
    <property type="term" value="P:endocytic recycling"/>
    <property type="evidence" value="ECO:0000305"/>
    <property type="project" value="BHF-UCL"/>
</dbReference>
<dbReference type="GO" id="GO:0006897">
    <property type="term" value="P:endocytosis"/>
    <property type="evidence" value="ECO:0000318"/>
    <property type="project" value="GO_Central"/>
</dbReference>
<dbReference type="GO" id="GO:0016197">
    <property type="term" value="P:endosomal transport"/>
    <property type="evidence" value="ECO:0000318"/>
    <property type="project" value="GO_Central"/>
</dbReference>
<dbReference type="GO" id="GO:0006895">
    <property type="term" value="P:Golgi to endosome transport"/>
    <property type="evidence" value="ECO:0000315"/>
    <property type="project" value="UniProtKB"/>
</dbReference>
<dbReference type="GO" id="GO:0001921">
    <property type="term" value="P:positive regulation of receptor recycling"/>
    <property type="evidence" value="ECO:0007669"/>
    <property type="project" value="Ensembl"/>
</dbReference>
<dbReference type="GO" id="GO:0098884">
    <property type="term" value="P:postsynaptic neurotransmitter receptor internalization"/>
    <property type="evidence" value="ECO:0007669"/>
    <property type="project" value="Ensembl"/>
</dbReference>
<dbReference type="GO" id="GO:0019065">
    <property type="term" value="P:receptor-mediated endocytosis of virus by host cell"/>
    <property type="evidence" value="ECO:0000315"/>
    <property type="project" value="CACAO"/>
</dbReference>
<dbReference type="GO" id="GO:0042127">
    <property type="term" value="P:regulation of cell population proliferation"/>
    <property type="evidence" value="ECO:0007669"/>
    <property type="project" value="Ensembl"/>
</dbReference>
<dbReference type="GO" id="GO:0032880">
    <property type="term" value="P:regulation of protein localization"/>
    <property type="evidence" value="ECO:0007669"/>
    <property type="project" value="Ensembl"/>
</dbReference>
<dbReference type="GO" id="GO:0046718">
    <property type="term" value="P:symbiont entry into host cell"/>
    <property type="evidence" value="ECO:0000315"/>
    <property type="project" value="CACAO"/>
</dbReference>
<dbReference type="GO" id="GO:0070086">
    <property type="term" value="P:ubiquitin-dependent endocytosis"/>
    <property type="evidence" value="ECO:0007669"/>
    <property type="project" value="Ensembl"/>
</dbReference>
<dbReference type="GO" id="GO:0016050">
    <property type="term" value="P:vesicle organization"/>
    <property type="evidence" value="ECO:0000304"/>
    <property type="project" value="UniProtKB"/>
</dbReference>
<dbReference type="CDD" id="cd00052">
    <property type="entry name" value="EH"/>
    <property type="match status" value="3"/>
</dbReference>
<dbReference type="FunFam" id="1.10.287.1490:FF:000003">
    <property type="entry name" value="Epidermal growth factor receptor pathway substrate 15"/>
    <property type="match status" value="1"/>
</dbReference>
<dbReference type="FunFam" id="1.10.238.10:FF:000026">
    <property type="entry name" value="Epidermal growth factor receptor pathway substrate 15-like 1"/>
    <property type="match status" value="1"/>
</dbReference>
<dbReference type="FunFam" id="1.10.238.10:FF:000074">
    <property type="entry name" value="epidermal growth factor receptor substrate 15 isoform X1"/>
    <property type="match status" value="1"/>
</dbReference>
<dbReference type="Gene3D" id="1.10.287.1490">
    <property type="match status" value="1"/>
</dbReference>
<dbReference type="Gene3D" id="1.10.238.10">
    <property type="entry name" value="EF-hand"/>
    <property type="match status" value="3"/>
</dbReference>
<dbReference type="InterPro" id="IPR011992">
    <property type="entry name" value="EF-hand-dom_pair"/>
</dbReference>
<dbReference type="InterPro" id="IPR018247">
    <property type="entry name" value="EF_Hand_1_Ca_BS"/>
</dbReference>
<dbReference type="InterPro" id="IPR002048">
    <property type="entry name" value="EF_hand_dom"/>
</dbReference>
<dbReference type="InterPro" id="IPR000261">
    <property type="entry name" value="EH_dom"/>
</dbReference>
<dbReference type="InterPro" id="IPR003903">
    <property type="entry name" value="UIM_dom"/>
</dbReference>
<dbReference type="PANTHER" id="PTHR11216">
    <property type="entry name" value="EH DOMAIN"/>
    <property type="match status" value="1"/>
</dbReference>
<dbReference type="PANTHER" id="PTHR11216:SF54">
    <property type="entry name" value="EPIDERMAL GROWTH FACTOR RECEPTOR SUBSTRATE 15"/>
    <property type="match status" value="1"/>
</dbReference>
<dbReference type="Pfam" id="PF12763">
    <property type="entry name" value="EH"/>
    <property type="match status" value="3"/>
</dbReference>
<dbReference type="SMART" id="SM00054">
    <property type="entry name" value="EFh"/>
    <property type="match status" value="3"/>
</dbReference>
<dbReference type="SMART" id="SM00027">
    <property type="entry name" value="EH"/>
    <property type="match status" value="3"/>
</dbReference>
<dbReference type="SMART" id="SM00726">
    <property type="entry name" value="UIM"/>
    <property type="match status" value="3"/>
</dbReference>
<dbReference type="SUPFAM" id="SSF47473">
    <property type="entry name" value="EF-hand"/>
    <property type="match status" value="3"/>
</dbReference>
<dbReference type="SUPFAM" id="SSF90257">
    <property type="entry name" value="Myosin rod fragments"/>
    <property type="match status" value="1"/>
</dbReference>
<dbReference type="PROSITE" id="PS00018">
    <property type="entry name" value="EF_HAND_1"/>
    <property type="match status" value="2"/>
</dbReference>
<dbReference type="PROSITE" id="PS50222">
    <property type="entry name" value="EF_HAND_2"/>
    <property type="match status" value="4"/>
</dbReference>
<dbReference type="PROSITE" id="PS50031">
    <property type="entry name" value="EH"/>
    <property type="match status" value="3"/>
</dbReference>
<dbReference type="PROSITE" id="PS50330">
    <property type="entry name" value="UIM"/>
    <property type="match status" value="2"/>
</dbReference>
<keyword id="KW-0002">3D-structure</keyword>
<keyword id="KW-0007">Acetylation</keyword>
<keyword id="KW-0025">Alternative splicing</keyword>
<keyword id="KW-0106">Calcium</keyword>
<keyword id="KW-1003">Cell membrane</keyword>
<keyword id="KW-0160">Chromosomal rearrangement</keyword>
<keyword id="KW-0168">Coated pit</keyword>
<keyword id="KW-0963">Cytoplasm</keyword>
<keyword id="KW-0254">Endocytosis</keyword>
<keyword id="KW-0967">Endosome</keyword>
<keyword id="KW-0945">Host-virus interaction</keyword>
<keyword id="KW-0472">Membrane</keyword>
<keyword id="KW-0479">Metal-binding</keyword>
<keyword id="KW-0597">Phosphoprotein</keyword>
<keyword id="KW-0653">Protein transport</keyword>
<keyword id="KW-1267">Proteomics identification</keyword>
<keyword id="KW-0656">Proto-oncogene</keyword>
<keyword id="KW-1185">Reference proteome</keyword>
<keyword id="KW-0677">Repeat</keyword>
<keyword id="KW-0729">SH3-binding</keyword>
<keyword id="KW-0813">Transport</keyword>
<keyword id="KW-0832">Ubl conjugation</keyword>
<name>EPS15_HUMAN</name>
<reference key="1">
    <citation type="journal article" date="1994" name="Oncogene">
        <title>The human eps15 gene, encoding a tyrosine kinase substrate, is conserved in evolution and maps to 1p31-p32.</title>
        <authorList>
            <person name="Wong W.T."/>
            <person name="Kraus M.H."/>
            <person name="Carlomagno F."/>
            <person name="Zelano A."/>
            <person name="Druck T."/>
            <person name="Croce C.M."/>
            <person name="Huebner K."/>
            <person name="di Fiore P.P."/>
        </authorList>
    </citation>
    <scope>NUCLEOTIDE SEQUENCE [MRNA] (ISOFORM 1)</scope>
    <scope>VARIANT MET-822</scope>
    <source>
        <tissue>Melanoma</tissue>
    </source>
</reference>
<reference key="2">
    <citation type="journal article" date="1994" name="Oncogene">
        <title>A novel gene, AF-1p, fused to HRX in t(1;11)(p32;q23), is not related to AF-4, AF-9 nor ENL.</title>
        <authorList>
            <person name="Bernard O.A."/>
            <person name="Mauchauffe M."/>
            <person name="Mecucci C."/>
            <person name="van den Berghe H."/>
            <person name="Berger R."/>
        </authorList>
    </citation>
    <scope>NUCLEOTIDE SEQUENCE [MRNA] (ISOFORM 1)</scope>
</reference>
<reference key="3">
    <citation type="journal article" date="2004" name="Nat. Genet.">
        <title>Complete sequencing and characterization of 21,243 full-length human cDNAs.</title>
        <authorList>
            <person name="Ota T."/>
            <person name="Suzuki Y."/>
            <person name="Nishikawa T."/>
            <person name="Otsuki T."/>
            <person name="Sugiyama T."/>
            <person name="Irie R."/>
            <person name="Wakamatsu A."/>
            <person name="Hayashi K."/>
            <person name="Sato H."/>
            <person name="Nagai K."/>
            <person name="Kimura K."/>
            <person name="Makita H."/>
            <person name="Sekine M."/>
            <person name="Obayashi M."/>
            <person name="Nishi T."/>
            <person name="Shibahara T."/>
            <person name="Tanaka T."/>
            <person name="Ishii S."/>
            <person name="Yamamoto J."/>
            <person name="Saito K."/>
            <person name="Kawai Y."/>
            <person name="Isono Y."/>
            <person name="Nakamura Y."/>
            <person name="Nagahari K."/>
            <person name="Murakami K."/>
            <person name="Yasuda T."/>
            <person name="Iwayanagi T."/>
            <person name="Wagatsuma M."/>
            <person name="Shiratori A."/>
            <person name="Sudo H."/>
            <person name="Hosoiri T."/>
            <person name="Kaku Y."/>
            <person name="Kodaira H."/>
            <person name="Kondo H."/>
            <person name="Sugawara M."/>
            <person name="Takahashi M."/>
            <person name="Kanda K."/>
            <person name="Yokoi T."/>
            <person name="Furuya T."/>
            <person name="Kikkawa E."/>
            <person name="Omura Y."/>
            <person name="Abe K."/>
            <person name="Kamihara K."/>
            <person name="Katsuta N."/>
            <person name="Sato K."/>
            <person name="Tanikawa M."/>
            <person name="Yamazaki M."/>
            <person name="Ninomiya K."/>
            <person name="Ishibashi T."/>
            <person name="Yamashita H."/>
            <person name="Murakawa K."/>
            <person name="Fujimori K."/>
            <person name="Tanai H."/>
            <person name="Kimata M."/>
            <person name="Watanabe M."/>
            <person name="Hiraoka S."/>
            <person name="Chiba Y."/>
            <person name="Ishida S."/>
            <person name="Ono Y."/>
            <person name="Takiguchi S."/>
            <person name="Watanabe S."/>
            <person name="Yosida M."/>
            <person name="Hotuta T."/>
            <person name="Kusano J."/>
            <person name="Kanehori K."/>
            <person name="Takahashi-Fujii A."/>
            <person name="Hara H."/>
            <person name="Tanase T.-O."/>
            <person name="Nomura Y."/>
            <person name="Togiya S."/>
            <person name="Komai F."/>
            <person name="Hara R."/>
            <person name="Takeuchi K."/>
            <person name="Arita M."/>
            <person name="Imose N."/>
            <person name="Musashino K."/>
            <person name="Yuuki H."/>
            <person name="Oshima A."/>
            <person name="Sasaki N."/>
            <person name="Aotsuka S."/>
            <person name="Yoshikawa Y."/>
            <person name="Matsunawa H."/>
            <person name="Ichihara T."/>
            <person name="Shiohata N."/>
            <person name="Sano S."/>
            <person name="Moriya S."/>
            <person name="Momiyama H."/>
            <person name="Satoh N."/>
            <person name="Takami S."/>
            <person name="Terashima Y."/>
            <person name="Suzuki O."/>
            <person name="Nakagawa S."/>
            <person name="Senoh A."/>
            <person name="Mizoguchi H."/>
            <person name="Goto Y."/>
            <person name="Shimizu F."/>
            <person name="Wakebe H."/>
            <person name="Hishigaki H."/>
            <person name="Watanabe T."/>
            <person name="Sugiyama A."/>
            <person name="Takemoto M."/>
            <person name="Kawakami B."/>
            <person name="Yamazaki M."/>
            <person name="Watanabe K."/>
            <person name="Kumagai A."/>
            <person name="Itakura S."/>
            <person name="Fukuzumi Y."/>
            <person name="Fujimori Y."/>
            <person name="Komiyama M."/>
            <person name="Tashiro H."/>
            <person name="Tanigami A."/>
            <person name="Fujiwara T."/>
            <person name="Ono T."/>
            <person name="Yamada K."/>
            <person name="Fujii Y."/>
            <person name="Ozaki K."/>
            <person name="Hirao M."/>
            <person name="Ohmori Y."/>
            <person name="Kawabata A."/>
            <person name="Hikiji T."/>
            <person name="Kobatake N."/>
            <person name="Inagaki H."/>
            <person name="Ikema Y."/>
            <person name="Okamoto S."/>
            <person name="Okitani R."/>
            <person name="Kawakami T."/>
            <person name="Noguchi S."/>
            <person name="Itoh T."/>
            <person name="Shigeta K."/>
            <person name="Senba T."/>
            <person name="Matsumura K."/>
            <person name="Nakajima Y."/>
            <person name="Mizuno T."/>
            <person name="Morinaga M."/>
            <person name="Sasaki M."/>
            <person name="Togashi T."/>
            <person name="Oyama M."/>
            <person name="Hata H."/>
            <person name="Watanabe M."/>
            <person name="Komatsu T."/>
            <person name="Mizushima-Sugano J."/>
            <person name="Satoh T."/>
            <person name="Shirai Y."/>
            <person name="Takahashi Y."/>
            <person name="Nakagawa K."/>
            <person name="Okumura K."/>
            <person name="Nagase T."/>
            <person name="Nomura N."/>
            <person name="Kikuchi H."/>
            <person name="Masuho Y."/>
            <person name="Yamashita R."/>
            <person name="Nakai K."/>
            <person name="Yada T."/>
            <person name="Nakamura Y."/>
            <person name="Ohara O."/>
            <person name="Isogai T."/>
            <person name="Sugano S."/>
        </authorList>
    </citation>
    <scope>NUCLEOTIDE SEQUENCE [LARGE SCALE MRNA] (ISOFORM 1)</scope>
    <source>
        <tissue>Trachea</tissue>
    </source>
</reference>
<reference key="4">
    <citation type="submission" date="2006-01" db="EMBL/GenBank/DDBJ databases">
        <title>Eps15 in human umbilical vein endothelial cells.</title>
        <authorList>
            <person name="Kronstein R."/>
            <person name="Grossklaus S."/>
            <person name="Schnittler H.-J."/>
        </authorList>
    </citation>
    <scope>NUCLEOTIDE SEQUENCE [MRNA] (ISOFORM 1)</scope>
</reference>
<reference key="5">
    <citation type="journal article" date="2007" name="BMC Genomics">
        <title>The full-ORF clone resource of the German cDNA consortium.</title>
        <authorList>
            <person name="Bechtel S."/>
            <person name="Rosenfelder H."/>
            <person name="Duda A."/>
            <person name="Schmidt C.P."/>
            <person name="Ernst U."/>
            <person name="Wellenreuther R."/>
            <person name="Mehrle A."/>
            <person name="Schuster C."/>
            <person name="Bahr A."/>
            <person name="Bloecker H."/>
            <person name="Heubner D."/>
            <person name="Hoerlein A."/>
            <person name="Michel G."/>
            <person name="Wedler H."/>
            <person name="Koehrer K."/>
            <person name="Ottenwaelder B."/>
            <person name="Poustka A."/>
            <person name="Wiemann S."/>
            <person name="Schupp I."/>
        </authorList>
    </citation>
    <scope>NUCLEOTIDE SEQUENCE [LARGE SCALE MRNA] (ISOFORM 2)</scope>
</reference>
<reference key="6">
    <citation type="journal article" date="2006" name="Nature">
        <title>The DNA sequence and biological annotation of human chromosome 1.</title>
        <authorList>
            <person name="Gregory S.G."/>
            <person name="Barlow K.F."/>
            <person name="McLay K.E."/>
            <person name="Kaul R."/>
            <person name="Swarbreck D."/>
            <person name="Dunham A."/>
            <person name="Scott C.E."/>
            <person name="Howe K.L."/>
            <person name="Woodfine K."/>
            <person name="Spencer C.C.A."/>
            <person name="Jones M.C."/>
            <person name="Gillson C."/>
            <person name="Searle S."/>
            <person name="Zhou Y."/>
            <person name="Kokocinski F."/>
            <person name="McDonald L."/>
            <person name="Evans R."/>
            <person name="Phillips K."/>
            <person name="Atkinson A."/>
            <person name="Cooper R."/>
            <person name="Jones C."/>
            <person name="Hall R.E."/>
            <person name="Andrews T.D."/>
            <person name="Lloyd C."/>
            <person name="Ainscough R."/>
            <person name="Almeida J.P."/>
            <person name="Ambrose K.D."/>
            <person name="Anderson F."/>
            <person name="Andrew R.W."/>
            <person name="Ashwell R.I.S."/>
            <person name="Aubin K."/>
            <person name="Babbage A.K."/>
            <person name="Bagguley C.L."/>
            <person name="Bailey J."/>
            <person name="Beasley H."/>
            <person name="Bethel G."/>
            <person name="Bird C.P."/>
            <person name="Bray-Allen S."/>
            <person name="Brown J.Y."/>
            <person name="Brown A.J."/>
            <person name="Buckley D."/>
            <person name="Burton J."/>
            <person name="Bye J."/>
            <person name="Carder C."/>
            <person name="Chapman J.C."/>
            <person name="Clark S.Y."/>
            <person name="Clarke G."/>
            <person name="Clee C."/>
            <person name="Cobley V."/>
            <person name="Collier R.E."/>
            <person name="Corby N."/>
            <person name="Coville G.J."/>
            <person name="Davies J."/>
            <person name="Deadman R."/>
            <person name="Dunn M."/>
            <person name="Earthrowl M."/>
            <person name="Ellington A.G."/>
            <person name="Errington H."/>
            <person name="Frankish A."/>
            <person name="Frankland J."/>
            <person name="French L."/>
            <person name="Garner P."/>
            <person name="Garnett J."/>
            <person name="Gay L."/>
            <person name="Ghori M.R.J."/>
            <person name="Gibson R."/>
            <person name="Gilby L.M."/>
            <person name="Gillett W."/>
            <person name="Glithero R.J."/>
            <person name="Grafham D.V."/>
            <person name="Griffiths C."/>
            <person name="Griffiths-Jones S."/>
            <person name="Grocock R."/>
            <person name="Hammond S."/>
            <person name="Harrison E.S.I."/>
            <person name="Hart E."/>
            <person name="Haugen E."/>
            <person name="Heath P.D."/>
            <person name="Holmes S."/>
            <person name="Holt K."/>
            <person name="Howden P.J."/>
            <person name="Hunt A.R."/>
            <person name="Hunt S.E."/>
            <person name="Hunter G."/>
            <person name="Isherwood J."/>
            <person name="James R."/>
            <person name="Johnson C."/>
            <person name="Johnson D."/>
            <person name="Joy A."/>
            <person name="Kay M."/>
            <person name="Kershaw J.K."/>
            <person name="Kibukawa M."/>
            <person name="Kimberley A.M."/>
            <person name="King A."/>
            <person name="Knights A.J."/>
            <person name="Lad H."/>
            <person name="Laird G."/>
            <person name="Lawlor S."/>
            <person name="Leongamornlert D.A."/>
            <person name="Lloyd D.M."/>
            <person name="Loveland J."/>
            <person name="Lovell J."/>
            <person name="Lush M.J."/>
            <person name="Lyne R."/>
            <person name="Martin S."/>
            <person name="Mashreghi-Mohammadi M."/>
            <person name="Matthews L."/>
            <person name="Matthews N.S.W."/>
            <person name="McLaren S."/>
            <person name="Milne S."/>
            <person name="Mistry S."/>
            <person name="Moore M.J.F."/>
            <person name="Nickerson T."/>
            <person name="O'Dell C.N."/>
            <person name="Oliver K."/>
            <person name="Palmeiri A."/>
            <person name="Palmer S.A."/>
            <person name="Parker A."/>
            <person name="Patel D."/>
            <person name="Pearce A.V."/>
            <person name="Peck A.I."/>
            <person name="Pelan S."/>
            <person name="Phelps K."/>
            <person name="Phillimore B.J."/>
            <person name="Plumb R."/>
            <person name="Rajan J."/>
            <person name="Raymond C."/>
            <person name="Rouse G."/>
            <person name="Saenphimmachak C."/>
            <person name="Sehra H.K."/>
            <person name="Sheridan E."/>
            <person name="Shownkeen R."/>
            <person name="Sims S."/>
            <person name="Skuce C.D."/>
            <person name="Smith M."/>
            <person name="Steward C."/>
            <person name="Subramanian S."/>
            <person name="Sycamore N."/>
            <person name="Tracey A."/>
            <person name="Tromans A."/>
            <person name="Van Helmond Z."/>
            <person name="Wall M."/>
            <person name="Wallis J.M."/>
            <person name="White S."/>
            <person name="Whitehead S.L."/>
            <person name="Wilkinson J.E."/>
            <person name="Willey D.L."/>
            <person name="Williams H."/>
            <person name="Wilming L."/>
            <person name="Wray P.W."/>
            <person name="Wu Z."/>
            <person name="Coulson A."/>
            <person name="Vaudin M."/>
            <person name="Sulston J.E."/>
            <person name="Durbin R.M."/>
            <person name="Hubbard T."/>
            <person name="Wooster R."/>
            <person name="Dunham I."/>
            <person name="Carter N.P."/>
            <person name="McVean G."/>
            <person name="Ross M.T."/>
            <person name="Harrow J."/>
            <person name="Olson M.V."/>
            <person name="Beck S."/>
            <person name="Rogers J."/>
            <person name="Bentley D.R."/>
        </authorList>
    </citation>
    <scope>NUCLEOTIDE SEQUENCE [LARGE SCALE GENOMIC DNA]</scope>
</reference>
<reference key="7">
    <citation type="submission" date="2005-09" db="EMBL/GenBank/DDBJ databases">
        <authorList>
            <person name="Mural R.J."/>
            <person name="Istrail S."/>
            <person name="Sutton G.G."/>
            <person name="Florea L."/>
            <person name="Halpern A.L."/>
            <person name="Mobarry C.M."/>
            <person name="Lippert R."/>
            <person name="Walenz B."/>
            <person name="Shatkay H."/>
            <person name="Dew I."/>
            <person name="Miller J.R."/>
            <person name="Flanigan M.J."/>
            <person name="Edwards N.J."/>
            <person name="Bolanos R."/>
            <person name="Fasulo D."/>
            <person name="Halldorsson B.V."/>
            <person name="Hannenhalli S."/>
            <person name="Turner R."/>
            <person name="Yooseph S."/>
            <person name="Lu F."/>
            <person name="Nusskern D.R."/>
            <person name="Shue B.C."/>
            <person name="Zheng X.H."/>
            <person name="Zhong F."/>
            <person name="Delcher A.L."/>
            <person name="Huson D.H."/>
            <person name="Kravitz S.A."/>
            <person name="Mouchard L."/>
            <person name="Reinert K."/>
            <person name="Remington K.A."/>
            <person name="Clark A.G."/>
            <person name="Waterman M.S."/>
            <person name="Eichler E.E."/>
            <person name="Adams M.D."/>
            <person name="Hunkapiller M.W."/>
            <person name="Myers E.W."/>
            <person name="Venter J.C."/>
        </authorList>
    </citation>
    <scope>NUCLEOTIDE SEQUENCE [LARGE SCALE GENOMIC DNA]</scope>
</reference>
<reference key="8">
    <citation type="journal article" date="1996" name="J. Biol. Chem.">
        <title>Interaction between the amino-terminal SH3 domain of CRK and its natural target proteins.</title>
        <authorList>
            <person name="Matsuda M."/>
            <person name="Ota S."/>
            <person name="Tanimura R."/>
            <person name="Nakamura H."/>
            <person name="Matuoka K."/>
            <person name="Takenawa T."/>
            <person name="Nagashima K."/>
            <person name="Kurata T."/>
        </authorList>
    </citation>
    <scope>INTERACTION WITH CRK</scope>
</reference>
<reference key="9">
    <citation type="journal article" date="1998" name="Nature">
        <title>Epsin is an EH-domain-binding protein implicated in clathrin-mediated endocytosis.</title>
        <authorList>
            <person name="Chen H."/>
            <person name="Fre S."/>
            <person name="Slepnev V.I."/>
            <person name="Capua M.R."/>
            <person name="Takei K."/>
            <person name="Butler M.H."/>
            <person name="Di Fiore P.P."/>
            <person name="De Camilli P."/>
        </authorList>
    </citation>
    <scope>INTERACTION WITH EPN1</scope>
</reference>
<reference key="10">
    <citation type="journal article" date="1999" name="EMBO J.">
        <title>Small G protein Ral and its downstream molecules regulate endocytosis of EGF and insulin receptors.</title>
        <authorList>
            <person name="Nakashima S."/>
            <person name="Morinaka K."/>
            <person name="Koyama S."/>
            <person name="Ikeda M."/>
            <person name="Kishida M."/>
            <person name="Okawa K."/>
            <person name="Iwamatsu A."/>
            <person name="Kishida S."/>
            <person name="Kikuchi A."/>
        </authorList>
    </citation>
    <scope>INTERACTION WITH EPN1 AND REPS2</scope>
</reference>
<reference key="11">
    <citation type="journal article" date="2003" name="J. Biol. Chem.">
        <title>STAM and Hrs are subunits of a multivalent ubiquitin-binding complex on early endosomes.</title>
        <authorList>
            <person name="Bache K.G."/>
            <person name="Raiborg C."/>
            <person name="Mehlum A."/>
            <person name="Stenmark H."/>
        </authorList>
    </citation>
    <scope>INTERACTION WITH HGS AND STAM2</scope>
</reference>
<reference key="12">
    <citation type="journal article" date="2005" name="Cell">
        <title>TTP specifically regulates the internalization of the transferrin receptor.</title>
        <authorList>
            <person name="Tosoni D."/>
            <person name="Puri C."/>
            <person name="Confalonieri S."/>
            <person name="Salcini A.E."/>
            <person name="De Camilli P."/>
            <person name="Tacchetti C."/>
            <person name="Di Fiore P.P."/>
        </authorList>
    </citation>
    <scope>INTERACTION WITH SH3BP4</scope>
</reference>
<reference key="13">
    <citation type="journal article" date="2005" name="J. Cell Sci.">
        <title>Ubiquilin recruits Eps15 into ubiquitin-rich cytoplasmic aggregates via a UIM-UBL interaction.</title>
        <authorList>
            <person name="Regan-Klapisz E."/>
            <person name="Sorokina I."/>
            <person name="Voortman J."/>
            <person name="de Keizer P."/>
            <person name="Roovers R.C."/>
            <person name="Verheesen P."/>
            <person name="Urbe S."/>
            <person name="Fallon L."/>
            <person name="Fon E.A."/>
            <person name="Verkleij A."/>
            <person name="Benmerah A."/>
            <person name="van Bergen en Henegouwen P.M."/>
        </authorList>
    </citation>
    <scope>INTERACTION WITH UBQLN1</scope>
    <scope>SUBCELLULAR LOCATION</scope>
</reference>
<reference key="14">
    <citation type="journal article" date="2005" name="Mol. Cell. Biol.">
        <title>Endosomal transport of ErbB-2: mechanism for nuclear entry of the cell surface receptor.</title>
        <authorList>
            <person name="Giri D.K."/>
            <person name="Ali-Seyed M."/>
            <person name="Li L.Y."/>
            <person name="Lee D.F."/>
            <person name="Ling P."/>
            <person name="Bartholomeusz G."/>
            <person name="Wang S.C."/>
            <person name="Hung M.C."/>
        </authorList>
    </citation>
    <scope>INTERACTION WITH ERBB2</scope>
</reference>
<reference key="15">
    <citation type="journal article" date="2006" name="Nat. Biotechnol.">
        <title>A probability-based approach for high-throughput protein phosphorylation analysis and site localization.</title>
        <authorList>
            <person name="Beausoleil S.A."/>
            <person name="Villen J."/>
            <person name="Gerber S.A."/>
            <person name="Rush J."/>
            <person name="Gygi S.P."/>
        </authorList>
    </citation>
    <scope>PHOSPHORYLATION [LARGE SCALE ANALYSIS] AT SER-323</scope>
    <scope>IDENTIFICATION BY MASS SPECTROMETRY [LARGE SCALE ANALYSIS]</scope>
    <source>
        <tissue>Cervix carcinoma</tissue>
    </source>
</reference>
<reference key="16">
    <citation type="journal article" date="2007" name="Science">
        <title>ATM and ATR substrate analysis reveals extensive protein networks responsive to DNA damage.</title>
        <authorList>
            <person name="Matsuoka S."/>
            <person name="Ballif B.A."/>
            <person name="Smogorzewska A."/>
            <person name="McDonald E.R. III"/>
            <person name="Hurov K.E."/>
            <person name="Luo J."/>
            <person name="Bakalarski C.E."/>
            <person name="Zhao Z."/>
            <person name="Solimini N."/>
            <person name="Lerenthal Y."/>
            <person name="Shiloh Y."/>
            <person name="Gygi S.P."/>
            <person name="Elledge S.J."/>
        </authorList>
    </citation>
    <scope>PHOSPHORYLATION [LARGE SCALE ANALYSIS] AT SER-485</scope>
    <scope>IDENTIFICATION BY MASS SPECTROMETRY [LARGE SCALE ANALYSIS]</scope>
    <source>
        <tissue>Embryonic kidney</tissue>
    </source>
</reference>
<reference key="17">
    <citation type="journal article" date="2008" name="J. Cell Biol.">
        <title>An endosomally localized isoform of Eps15 interacts with Hrs to mediate degradation of epidermal growth factor receptor.</title>
        <authorList>
            <person name="Roxrud I."/>
            <person name="Raiborg C."/>
            <person name="Pedersen N.M."/>
            <person name="Stang E."/>
            <person name="Stenmark H."/>
        </authorList>
    </citation>
    <scope>FUNCTION</scope>
    <scope>ALTERNATIVE SPLICING (ISOFORM 2)</scope>
    <scope>SUBCELLULAR LOCATION (ISOFORM 2)</scope>
    <scope>INTERACTION WITH HSG AND AP2A2</scope>
</reference>
<reference key="18">
    <citation type="journal article" date="2008" name="J. Proteome Res.">
        <title>Phosphoproteome of resting human platelets.</title>
        <authorList>
            <person name="Zahedi R.P."/>
            <person name="Lewandrowski U."/>
            <person name="Wiesner J."/>
            <person name="Wortelkamp S."/>
            <person name="Moebius J."/>
            <person name="Schuetz C."/>
            <person name="Walter U."/>
            <person name="Gambaryan S."/>
            <person name="Sickmann A."/>
        </authorList>
    </citation>
    <scope>PHOSPHORYLATION [LARGE SCALE ANALYSIS] AT SER-796 AND SER-814</scope>
    <scope>IDENTIFICATION BY MASS SPECTROMETRY [LARGE SCALE ANALYSIS]</scope>
    <source>
        <tissue>Platelet</tissue>
    </source>
</reference>
<reference key="19">
    <citation type="journal article" date="2008" name="Mol. Biol. Cell">
        <title>The ubiquitin-like protein PLIC-2 is a negative regulator of G protein-coupled receptor endocytosis.</title>
        <authorList>
            <person name="N'Diaye E.N."/>
            <person name="Hanyaloglu A.C."/>
            <person name="Kajihara K.K."/>
            <person name="Puthenveedu M.A."/>
            <person name="Wu P."/>
            <person name="von Zastrow M."/>
            <person name="Brown E.J."/>
        </authorList>
    </citation>
    <scope>INTERACTION WITH UBQLN1 AND UBQLN2</scope>
</reference>
<reference key="20">
    <citation type="journal article" date="2008" name="Mol. Cell">
        <title>Kinase-selective enrichment enables quantitative phosphoproteomics of the kinome across the cell cycle.</title>
        <authorList>
            <person name="Daub H."/>
            <person name="Olsen J.V."/>
            <person name="Bairlein M."/>
            <person name="Gnad F."/>
            <person name="Oppermann F.S."/>
            <person name="Korner R."/>
            <person name="Greff Z."/>
            <person name="Keri G."/>
            <person name="Stemmann O."/>
            <person name="Mann M."/>
        </authorList>
    </citation>
    <scope>IDENTIFICATION BY MASS SPECTROMETRY [LARGE SCALE ANALYSIS]</scope>
    <source>
        <tissue>Cervix carcinoma</tissue>
    </source>
</reference>
<reference key="21">
    <citation type="journal article" date="2008" name="Proc. Natl. Acad. Sci. U.S.A.">
        <title>A quantitative atlas of mitotic phosphorylation.</title>
        <authorList>
            <person name="Dephoure N."/>
            <person name="Zhou C."/>
            <person name="Villen J."/>
            <person name="Beausoleil S.A."/>
            <person name="Bakalarski C.E."/>
            <person name="Elledge S.J."/>
            <person name="Gygi S.P."/>
        </authorList>
    </citation>
    <scope>PHOSPHORYLATION [LARGE SCALE ANALYSIS] AT SER-140; SER-323; SER-485 AND SER-814</scope>
    <scope>IDENTIFICATION BY MASS SPECTROMETRY [LARGE SCALE ANALYSIS]</scope>
    <source>
        <tissue>Cervix carcinoma</tissue>
    </source>
</reference>
<reference key="22">
    <citation type="journal article" date="2009" name="Anal. Chem.">
        <title>Lys-N and trypsin cover complementary parts of the phosphoproteome in a refined SCX-based approach.</title>
        <authorList>
            <person name="Gauci S."/>
            <person name="Helbig A.O."/>
            <person name="Slijper M."/>
            <person name="Krijgsveld J."/>
            <person name="Heck A.J."/>
            <person name="Mohammed S."/>
        </authorList>
    </citation>
    <scope>ACETYLATION [LARGE SCALE ANALYSIS] AT ALA-2</scope>
    <scope>CLEAVAGE OF INITIATOR METHIONINE [LARGE SCALE ANALYSIS]</scope>
    <scope>IDENTIFICATION BY MASS SPECTROMETRY [LARGE SCALE ANALYSIS]</scope>
</reference>
<reference key="23">
    <citation type="journal article" date="2009" name="Mol. Biol. Cell">
        <title>Endocytic accessory proteins are functionally distinguished by their differential effects on the maturation of clathrin-coated pits.</title>
        <authorList>
            <person name="Mettlen M."/>
            <person name="Stoeber M."/>
            <person name="Loerke D."/>
            <person name="Antonescu C.N."/>
            <person name="Danuser G."/>
            <person name="Schmid S.L."/>
        </authorList>
    </citation>
    <scope>FUNCTION</scope>
</reference>
<reference key="24">
    <citation type="journal article" date="2009" name="Sci. Signal.">
        <title>Quantitative phosphoproteomic analysis of T cell receptor signaling reveals system-wide modulation of protein-protein interactions.</title>
        <authorList>
            <person name="Mayya V."/>
            <person name="Lundgren D.H."/>
            <person name="Hwang S.-I."/>
            <person name="Rezaul K."/>
            <person name="Wu L."/>
            <person name="Eng J.K."/>
            <person name="Rodionov V."/>
            <person name="Han D.K."/>
        </authorList>
    </citation>
    <scope>PHOSPHORYLATION [LARGE SCALE ANALYSIS] AT SER-108; SER-323; SER-324; SER-814 AND TYR-849</scope>
    <scope>IDENTIFICATION BY MASS SPECTROMETRY [LARGE SCALE ANALYSIS]</scope>
    <source>
        <tissue>Leukemic T-cell</tissue>
    </source>
</reference>
<reference key="25">
    <citation type="journal article" date="2010" name="Sci. Signal.">
        <title>Quantitative phosphoproteomics reveals widespread full phosphorylation site occupancy during mitosis.</title>
        <authorList>
            <person name="Olsen J.V."/>
            <person name="Vermeulen M."/>
            <person name="Santamaria A."/>
            <person name="Kumar C."/>
            <person name="Miller M.L."/>
            <person name="Jensen L.J."/>
            <person name="Gnad F."/>
            <person name="Cox J."/>
            <person name="Jensen T.S."/>
            <person name="Nigg E.A."/>
            <person name="Brunak S."/>
            <person name="Mann M."/>
        </authorList>
    </citation>
    <scope>PHOSPHORYLATION [LARGE SCALE ANALYSIS] AT SER-324; SER-467; SER-470; SER-790; SER-796 AND SER-814</scope>
    <scope>IDENTIFICATION BY MASS SPECTROMETRY [LARGE SCALE ANALYSIS]</scope>
    <source>
        <tissue>Cervix carcinoma</tissue>
    </source>
</reference>
<reference key="26">
    <citation type="journal article" date="2010" name="Science">
        <title>FCHo proteins are nucleators of clathrin-mediated endocytosis.</title>
        <authorList>
            <person name="Henne W.M."/>
            <person name="Boucrot E."/>
            <person name="Meinecke M."/>
            <person name="Evergren E."/>
            <person name="Vallis Y."/>
            <person name="Mittal R."/>
            <person name="McMahon H.T."/>
        </authorList>
    </citation>
    <scope>INTERACTION WITH FCHO2</scope>
</reference>
<reference key="27">
    <citation type="journal article" date="2011" name="BMC Syst. Biol.">
        <title>Initial characterization of the human central proteome.</title>
        <authorList>
            <person name="Burkard T.R."/>
            <person name="Planyavsky M."/>
            <person name="Kaupe I."/>
            <person name="Breitwieser F.P."/>
            <person name="Buerckstuemmer T."/>
            <person name="Bennett K.L."/>
            <person name="Superti-Furga G."/>
            <person name="Colinge J."/>
        </authorList>
    </citation>
    <scope>IDENTIFICATION BY MASS SPECTROMETRY [LARGE SCALE ANALYSIS]</scope>
</reference>
<reference key="28">
    <citation type="journal article" date="2011" name="Genes Cells">
        <title>Characterization of the EFC/F-BAR domain protein, FCHO2.</title>
        <authorList>
            <person name="Uezu A."/>
            <person name="Umeda K."/>
            <person name="Tsujita K."/>
            <person name="Suetsugu S."/>
            <person name="Takenawa T."/>
            <person name="Nakanishi H."/>
        </authorList>
    </citation>
    <scope>INTERACTION WITH FCHO2</scope>
</reference>
<reference key="29">
    <citation type="journal article" date="2011" name="Sci. Signal.">
        <title>System-wide temporal characterization of the proteome and phosphoproteome of human embryonic stem cell differentiation.</title>
        <authorList>
            <person name="Rigbolt K.T."/>
            <person name="Prokhorova T.A."/>
            <person name="Akimov V."/>
            <person name="Henningsen J."/>
            <person name="Johansen P.T."/>
            <person name="Kratchmarova I."/>
            <person name="Kassem M."/>
            <person name="Mann M."/>
            <person name="Olsen J.V."/>
            <person name="Blagoev B."/>
        </authorList>
    </citation>
    <scope>PHOSPHORYLATION [LARGE SCALE ANALYSIS] AT SER-324; SER-485; SER-790; SER-796 AND SER-814</scope>
    <scope>IDENTIFICATION BY MASS SPECTROMETRY [LARGE SCALE ANALYSIS]</scope>
</reference>
<reference key="30">
    <citation type="journal article" date="2012" name="Mol. Biol. Cell">
        <title>The clathrin adaptor Dab2 recruits EH domain scaffold proteins to regulate integrin beta1 endocytosis.</title>
        <authorList>
            <person name="Teckchandani A."/>
            <person name="Mulkearns E.E."/>
            <person name="Randolph T.W."/>
            <person name="Toida N."/>
            <person name="Cooper J.A."/>
        </authorList>
    </citation>
    <scope>FUNCTION</scope>
    <scope>INTERACTION WITH DAB2</scope>
</reference>
<reference key="31">
    <citation type="journal article" date="2012" name="Mol. Cell. Proteomics">
        <title>Comparative large-scale characterisation of plant vs. mammal proteins reveals similar and idiosyncratic N-alpha acetylation features.</title>
        <authorList>
            <person name="Bienvenut W.V."/>
            <person name="Sumpton D."/>
            <person name="Martinez A."/>
            <person name="Lilla S."/>
            <person name="Espagne C."/>
            <person name="Meinnel T."/>
            <person name="Giglione C."/>
        </authorList>
    </citation>
    <scope>ACETYLATION [LARGE SCALE ANALYSIS] AT ALA-2</scope>
    <scope>CLEAVAGE OF INITIATOR METHIONINE [LARGE SCALE ANALYSIS]</scope>
    <scope>IDENTIFICATION BY MASS SPECTROMETRY [LARGE SCALE ANALYSIS]</scope>
</reference>
<reference key="32">
    <citation type="journal article" date="2012" name="Nat. Cell Biol.">
        <title>Distinct and separable activities of the endocytic clathrin-coat components Fcho1/2 and AP-2 in developmental patterning.</title>
        <authorList>
            <person name="Umasankar P.K."/>
            <person name="Sanker S."/>
            <person name="Thieman J.R."/>
            <person name="Chakraborty S."/>
            <person name="Wendland B."/>
            <person name="Tsang M."/>
            <person name="Traub L.M."/>
        </authorList>
    </citation>
    <scope>INTERACTION WITH FCHO1</scope>
</reference>
<reference key="33">
    <citation type="journal article" date="2012" name="Proc. Natl. Acad. Sci. U.S.A.">
        <title>N-terminal acetylome analyses and functional insights of the N-terminal acetyltransferase NatB.</title>
        <authorList>
            <person name="Van Damme P."/>
            <person name="Lasa M."/>
            <person name="Polevoda B."/>
            <person name="Gazquez C."/>
            <person name="Elosegui-Artola A."/>
            <person name="Kim D.S."/>
            <person name="De Juan-Pardo E."/>
            <person name="Demeyer K."/>
            <person name="Hole K."/>
            <person name="Larrea E."/>
            <person name="Timmerman E."/>
            <person name="Prieto J."/>
            <person name="Arnesen T."/>
            <person name="Sherman F."/>
            <person name="Gevaert K."/>
            <person name="Aldabe R."/>
        </authorList>
    </citation>
    <scope>ACETYLATION [LARGE SCALE ANALYSIS] AT ALA-2</scope>
    <scope>CLEAVAGE OF INITIATOR METHIONINE [LARGE SCALE ANALYSIS]</scope>
    <scope>IDENTIFICATION BY MASS SPECTROMETRY [LARGE SCALE ANALYSIS]</scope>
</reference>
<reference key="34">
    <citation type="journal article" date="2013" name="J. Proteome Res.">
        <title>Toward a comprehensive characterization of a human cancer cell phosphoproteome.</title>
        <authorList>
            <person name="Zhou H."/>
            <person name="Di Palma S."/>
            <person name="Preisinger C."/>
            <person name="Peng M."/>
            <person name="Polat A.N."/>
            <person name="Heck A.J."/>
            <person name="Mohammed S."/>
        </authorList>
    </citation>
    <scope>PHOSPHORYLATION [LARGE SCALE ANALYSIS] AT SER-324; SER-746; THR-777; SER-790; SER-796 AND SER-814</scope>
    <scope>IDENTIFICATION BY MASS SPECTROMETRY [LARGE SCALE ANALYSIS]</scope>
    <source>
        <tissue>Cervix carcinoma</tissue>
        <tissue>Erythroleukemia</tissue>
    </source>
</reference>
<reference key="35">
    <citation type="journal article" date="2014" name="J. Proteomics">
        <title>An enzyme assisted RP-RPLC approach for in-depth analysis of human liver phosphoproteome.</title>
        <authorList>
            <person name="Bian Y."/>
            <person name="Song C."/>
            <person name="Cheng K."/>
            <person name="Dong M."/>
            <person name="Wang F."/>
            <person name="Huang J."/>
            <person name="Sun D."/>
            <person name="Wang L."/>
            <person name="Ye M."/>
            <person name="Zou H."/>
        </authorList>
    </citation>
    <scope>PHOSPHORYLATION [LARGE SCALE ANALYSIS] AT SER-324; THR-777; SER-796 AND SER-814</scope>
    <scope>IDENTIFICATION BY MASS SPECTROMETRY [LARGE SCALE ANALYSIS]</scope>
    <source>
        <tissue>Liver</tissue>
    </source>
</reference>
<reference key="36">
    <citation type="journal article" date="2014" name="Mol. Cell">
        <title>K33-linked polyubiquitination of coronin 7 by Cul3-KLHL20 ubiquitin E3 ligase regulates protein trafficking.</title>
        <authorList>
            <person name="Yuan W.C."/>
            <person name="Lee Y.R."/>
            <person name="Lin S.Y."/>
            <person name="Chang L.Y."/>
            <person name="Tan Y.P."/>
            <person name="Hung C.C."/>
            <person name="Kuo J.C."/>
            <person name="Liu C.H."/>
            <person name="Lin M.Y."/>
            <person name="Xu M."/>
            <person name="Chen Z.J."/>
            <person name="Chen R.H."/>
        </authorList>
    </citation>
    <scope>INTERACTION WITH CORO7</scope>
</reference>
<reference key="37">
    <citation type="journal article" date="2016" name="Nat. Microbiol.">
        <title>NPF motifs in the vaccinia virus protein A36 recruit intersectin-1 to promote Cdc42:N-WASP-mediated viral release from infected cells.</title>
        <authorList>
            <person name="Snetkov X."/>
            <person name="Weisswange I."/>
            <person name="Pfanzelter J."/>
            <person name="Humphries A.C."/>
            <person name="Way M."/>
        </authorList>
    </citation>
    <scope>INTERACTION WITH VACCINIA VIRUS PROTEIN A36 (MICROBIAL INFECTION)</scope>
</reference>
<reference key="38">
    <citation type="journal article" date="1998" name="Science">
        <title>Structure and Asn-Pro-Phe binding pocket of the Eps15 homology domain.</title>
        <authorList>
            <person name="de Beer T."/>
            <person name="Carter R.E."/>
            <person name="Lobel-Rice K.E."/>
            <person name="Sorkin A."/>
            <person name="Overduin M."/>
        </authorList>
    </citation>
    <scope>STRUCTURE BY NMR OF 121-215 IN COMPLEX WITH CALCIUM IONS</scope>
</reference>
<reference key="39">
    <citation type="journal article" date="2000" name="Biochemistry">
        <title>Solution structure of Eps15's third EH domain reveals coincident Phe-Trp and Asn-Pro-Phe binding sites.</title>
        <authorList>
            <person name="Enmon J.L."/>
            <person name="de Beer T."/>
            <person name="Overduin M."/>
        </authorList>
    </citation>
    <scope>STRUCTURE BY NMR OF 217-311 IN COMPLEX WITH CALCIUM IONS</scope>
</reference>
<reference key="40">
    <citation type="journal article" date="2000" name="Nat. Struct. Biol.">
        <title>Molecular mechanism of NPF recognition by EH domains.</title>
        <authorList>
            <person name="de Beer T."/>
            <person name="Hoofnagle A.N."/>
            <person name="Enmon J.L."/>
            <person name="Bowers R.C."/>
            <person name="Yamabhai M."/>
            <person name="Kay B.K."/>
            <person name="Overduin M."/>
        </authorList>
    </citation>
    <scope>STRUCTURE BY NMR OF 121-215 IN COMPLEX WITH PEPTIDE LIGAND AND CALCIUM IONS</scope>
    <scope>DOMAIN</scope>
</reference>
<reference key="41">
    <citation type="journal article" date="2006" name="PLoS Biol.">
        <title>Role of the AP2 beta-appendage hub in recruiting partners for clathrin-coated vesicle assembly.</title>
        <authorList>
            <person name="Schmid E.M."/>
            <person name="Ford M.G.J."/>
            <person name="Burtey A."/>
            <person name="Praefcke G.J.K."/>
            <person name="Peak-Chew S.-Y."/>
            <person name="Mills I.G."/>
            <person name="Benmerah A."/>
            <person name="McMahon H.T."/>
        </authorList>
    </citation>
    <scope>X-RAY CRYSTALLOGRAPHY (1.9 ANGSTROMS) OF 719-730 IN COMPLEX WITH AP2B1</scope>
    <scope>IDENTIFICATION BY MASS SPECTROMETRY</scope>
    <scope>SUBCELLULAR LOCATION</scope>
    <scope>FUNCTION</scope>
</reference>
<reference key="42">
    <citation type="journal article" date="2008" name="EMBO J.">
        <title>Structure of the Eps15-stonin2 complex provides a molecular explanation for EH-domain ligand specificity.</title>
        <authorList>
            <person name="Rumpf J."/>
            <person name="Simon B."/>
            <person name="Jung N."/>
            <person name="Maritzen T."/>
            <person name="Haucke V."/>
            <person name="Sattler M."/>
            <person name="Groemping Y."/>
        </authorList>
    </citation>
    <scope>STRUCTURE BY NMR OF 121-215 IN COMPLEX WITH STON2 AND CALCIUM IONS</scope>
    <scope>MUTAGENESIS OF VAL-154 AND TRP-169</scope>
    <scope>SUBCELLULAR LOCATION</scope>
</reference>
<reference key="43">
    <citation type="journal article" date="2016" name="Sci. Rep.">
        <title>Structural basis for the recognition of two consecutive mutually interacting DPF motifs by the SGIP1 mu homology domain.</title>
        <authorList>
            <person name="Shimada A."/>
            <person name="Yamaguchi A."/>
            <person name="Kohda D."/>
        </authorList>
    </citation>
    <scope>X-RAY CRYSTALLOGRAPHY (2.70 ANGSTROMS) OF 645-654</scope>
    <scope>INTERACTION WITH SGIP1</scope>
</reference>
<organism>
    <name type="scientific">Homo sapiens</name>
    <name type="common">Human</name>
    <dbReference type="NCBI Taxonomy" id="9606"/>
    <lineage>
        <taxon>Eukaryota</taxon>
        <taxon>Metazoa</taxon>
        <taxon>Chordata</taxon>
        <taxon>Craniata</taxon>
        <taxon>Vertebrata</taxon>
        <taxon>Euteleostomi</taxon>
        <taxon>Mammalia</taxon>
        <taxon>Eutheria</taxon>
        <taxon>Euarchontoglires</taxon>
        <taxon>Primates</taxon>
        <taxon>Haplorrhini</taxon>
        <taxon>Catarrhini</taxon>
        <taxon>Hominidae</taxon>
        <taxon>Homo</taxon>
    </lineage>
</organism>
<sequence>MAAAAQLSLTQLSSGNPVYEKYYRQVDTGNTGRVLASDAAAFLKKSGLPDLILGKIWDLADTDGKGILNKQEFFVALRLVACAQNGLEVSLSSLNLAVPPPRFHDTSSPLLISGTSAAELPWAVKPEDKAKYDAIFDSLSPVNGFLSGDKVKPVLLNSKLPVDILGRVWELSDIDHDGMLDRDEFAVAMFLVYCALEKEPVPMSLPPALVPPSKRKTWVVSPAEKAKYDEIFLKTDKDMDGFVSGLEVREIFLKTGLPSTLLAHIWSLCDTKDCGKLSKDQFALAFHLISQKLIKGIDPPHVLTPEMIPPSDRASLQKNIIGSSPVADFSAIKELDTLNNEIVDLQREKNNVEQDLKEKEDTIKQRTSEVQDLQDEVQRENTNLQKLQAQKQQVQELLDELDEQKAQLEEQLKEVRKKCAEEAQLISSLKAELTSQESQISTYEEELAKAREELSRLQQETAELEESVESGKAQLEPLQQHLQDSQQEISSMQMKLMEMKDLENHNSQLNWCSSPHSILVNGATDYCSLSTSSSETANLNEHVEGQSNLESEPIHQESPARSSPELLPSGVTDENEVTTAVTEKVCSELDNNRHSKEEDPFNVDSSSLTGPVADTNLDFFQSDPFVGSDPFKDDPFGKIDPFGGDPFKGSDPFASDCFFRQSTDPFATSSTDPFSAANNSSITSVETLKHNDPFAPGGTVVAASDSATDPFASVFGNESFGGGFADFSTLSKVNNEDPFRSATSSSVSNVVITKNVFEETSVKSEDEPPALPPKIGTPTRPCPLPPGKRSINKLDSPDPFKLNDPFQPFPGNDSPKEKDPEIFCDPFTSATTTTNKEADPSNFANFSAYPSEEDMIEWAKRESEREEEQRLARLNQQEQEDLELAIALSKSEISEA</sequence>
<gene>
    <name type="primary">EPS15</name>
    <name type="synonym">AF1P</name>
</gene>